<reference key="1">
    <citation type="journal article" date="1998" name="Biochim. Biophys. Acta">
        <title>Extraordinary features in the Chlamydomonas reinhardtii chloroplast genome: (1) rps2 as part of a large open reading frame; (2) a C. reinhardtii specific repeat sequence.</title>
        <authorList>
            <person name="Leu S."/>
        </authorList>
    </citation>
    <scope>NUCLEOTIDE SEQUENCE [GENOMIC DNA]</scope>
</reference>
<reference key="2">
    <citation type="journal article" date="2009" name="BMC Evol. Biol.">
        <title>Nucleotide diversity of the Chlamydomonas reinhardtii plastid genome: addressing the mutational-hazard hypothesis.</title>
        <authorList>
            <person name="Smith D.R."/>
            <person name="Lee R.W."/>
        </authorList>
    </citation>
    <scope>NUCLEOTIDE SEQUENCE [LARGE SCALE GENOMIC DNA]</scope>
    <source>
        <strain>CC-503</strain>
    </source>
</reference>
<reference key="3">
    <citation type="journal article" date="2002" name="Plant Cell">
        <title>Proteomic characterization of the small subunit of Chlamydomonas reinhardtii chloroplast ribosome: identification of a novel S1 domain-containing protein and unusually large orthologs of bacterial S2, S3, and S5.</title>
        <authorList>
            <person name="Yamaguchi K."/>
            <person name="Prieto S."/>
            <person name="Beligni M.V."/>
            <person name="Haynes P.A."/>
            <person name="McDonald W.H."/>
            <person name="Yates J.R. III"/>
            <person name="Mayfield S.P."/>
        </authorList>
    </citation>
    <scope>PROTEIN SEQUENCE OF 118-137; 160-173; 174-187; 279-295; 398-411 AND 538-549</scope>
    <source>
        <strain>Arg7/cw15</strain>
    </source>
</reference>
<reference key="4">
    <citation type="journal article" date="2002" name="Plant Cell">
        <title>The Chlamydomonas reinhardtii plastid chromosome: islands of genes in a sea of repeats.</title>
        <authorList>
            <person name="Maul J.E."/>
            <person name="Lilly J.W."/>
            <person name="Cui L."/>
            <person name="dePamphilis C.W."/>
            <person name="Miller W."/>
            <person name="Harris E.H."/>
            <person name="Stern D.B."/>
        </authorList>
    </citation>
    <scope>IDENTIFICATION</scope>
    <scope>COMPLETE PLASTID GENOME</scope>
</reference>
<protein>
    <recommendedName>
        <fullName evidence="1">Small ribosomal subunit protein uS2c</fullName>
    </recommendedName>
    <alternativeName>
        <fullName>30S ribosomal protein S2, chloroplastic</fullName>
    </alternativeName>
</protein>
<comment type="subcellular location">
    <subcellularLocation>
        <location>Plastid</location>
        <location>Chloroplast</location>
    </subcellularLocation>
</comment>
<comment type="similarity">
    <text evidence="1">Belongs to the universal ribosomal protein uS2 family.</text>
</comment>
<comment type="sequence caution" evidence="1">
    <conflict type="erroneous termination">
        <sequence resource="EMBL-CDS" id="ACJ50123"/>
    </conflict>
    <text>Extended C-terminus.</text>
</comment>
<geneLocation type="chloroplast"/>
<evidence type="ECO:0000305" key="1"/>
<sequence length="570" mass="63159">MLNKKPPYLILSLIMIKTQKSKQTAVRKLIPGNVISLKITAMGANNVGINEFTFGIPVLVPNAKLGETVQAKVLKILASKKIAIAKLIKVVTKTNATETNNLAALTPGATLDVTITKLGPNSTGIADLGNNYNNVNKLIVKKSAITIGEKVTVLVTRVKNGYAFGVATVSTQRLNQVSTSLTQNSFKGTKFTVVLPKNAKRYLKHLVFKVTTATAQNLSVNGFEQTLFKKGAVGLDTRINNQNGSAGNLTTVPTNTILFVKPNLGAKLGDKVQIQIIKFASIENGTLTYNVAIAKIIKLNPLSTPQKKAFVRSSLRQMLKSGMHYGEKAIKCNARMKNYVWTRKKGTDTKVEARPLIKKGRNLINLLKTRRCLTKALAQLTKYAAKGKTFLFVGTKKAASGLVARAALFSKKAFFVNTRWLGGMLTNWKTILKSISKIRPILKEKQMIIKDILEKRQTIKARLIQKALLLRKKSKLMLKKGRLLIQMLKQNNSNSTSGKQAVRFLFTEKTNLLNTKRKEFVSKGILLLEKRQQLVVKRQELITQSQTLKSKAIQLTNTISQFIKQFNLFT</sequence>
<proteinExistence type="evidence at protein level"/>
<gene>
    <name type="primary">rps2-1</name>
</gene>
<feature type="chain" id="PRO_0000134316" description="Small ribosomal subunit protein uS2c">
    <location>
        <begin position="1"/>
        <end position="570"/>
    </location>
</feature>
<feature type="domain" description="TRAM 1">
    <location>
        <begin position="28"/>
        <end position="89"/>
    </location>
</feature>
<feature type="domain" description="TRAM 2">
    <location>
        <begin position="104"/>
        <end position="169"/>
    </location>
</feature>
<feature type="region of interest" description="N-terminal extension">
    <location>
        <begin position="1"/>
        <end position="306"/>
    </location>
</feature>
<name>RR2A_CHLRE</name>
<accession>O47027</accession>
<accession>B7U1H6</accession>
<dbReference type="EMBL" id="Y16473">
    <property type="protein sequence ID" value="CAA76245.1"/>
    <property type="molecule type" value="Genomic_DNA"/>
</dbReference>
<dbReference type="EMBL" id="FJ423446">
    <property type="protein sequence ID" value="ACJ50123.1"/>
    <property type="status" value="ALT_SEQ"/>
    <property type="molecule type" value="Genomic_DNA"/>
</dbReference>
<dbReference type="EMBL" id="BK000554">
    <property type="protein sequence ID" value="DAA00936.1"/>
    <property type="molecule type" value="Genomic_DNA"/>
</dbReference>
<dbReference type="PIR" id="T07993">
    <property type="entry name" value="T07993"/>
</dbReference>
<dbReference type="SMR" id="O47027"/>
<dbReference type="STRING" id="3055.O47027"/>
<dbReference type="PaxDb" id="3055-DAA00936"/>
<dbReference type="KEGG" id="cre:ChreCp035"/>
<dbReference type="eggNOG" id="KOG0832">
    <property type="taxonomic scope" value="Eukaryota"/>
</dbReference>
<dbReference type="HOGENOM" id="CLU_478486_0_0_1"/>
<dbReference type="InParanoid" id="O47027"/>
<dbReference type="Proteomes" id="UP000006906">
    <property type="component" value="Chloroplast"/>
</dbReference>
<dbReference type="GO" id="GO:0009507">
    <property type="term" value="C:chloroplast"/>
    <property type="evidence" value="ECO:0007669"/>
    <property type="project" value="UniProtKB-SubCell"/>
</dbReference>
<dbReference type="GO" id="GO:0005763">
    <property type="term" value="C:mitochondrial small ribosomal subunit"/>
    <property type="evidence" value="ECO:0000318"/>
    <property type="project" value="GO_Central"/>
</dbReference>
<dbReference type="GO" id="GO:0003735">
    <property type="term" value="F:structural constituent of ribosome"/>
    <property type="evidence" value="ECO:0000318"/>
    <property type="project" value="GO_Central"/>
</dbReference>
<dbReference type="GO" id="GO:0006412">
    <property type="term" value="P:translation"/>
    <property type="evidence" value="ECO:0007669"/>
    <property type="project" value="UniProtKB-UniRule"/>
</dbReference>
<dbReference type="CDD" id="cd01425">
    <property type="entry name" value="RPS2"/>
    <property type="match status" value="1"/>
</dbReference>
<dbReference type="Gene3D" id="3.40.50.10490">
    <property type="entry name" value="Glucose-6-phosphate isomerase like protein, domain 1"/>
    <property type="match status" value="1"/>
</dbReference>
<dbReference type="Gene3D" id="2.40.50.140">
    <property type="entry name" value="Nucleic acid-binding proteins"/>
    <property type="match status" value="2"/>
</dbReference>
<dbReference type="HAMAP" id="MF_00291_B">
    <property type="entry name" value="Ribosomal_uS2_B"/>
    <property type="match status" value="1"/>
</dbReference>
<dbReference type="InterPro" id="IPR012340">
    <property type="entry name" value="NA-bd_OB-fold"/>
</dbReference>
<dbReference type="InterPro" id="IPR001865">
    <property type="entry name" value="Ribosomal_uS2"/>
</dbReference>
<dbReference type="InterPro" id="IPR005706">
    <property type="entry name" value="Ribosomal_uS2_bac/mit/plastid"/>
</dbReference>
<dbReference type="InterPro" id="IPR023591">
    <property type="entry name" value="Ribosomal_uS2_flav_dom_sf"/>
</dbReference>
<dbReference type="InterPro" id="IPR002792">
    <property type="entry name" value="TRAM_dom"/>
</dbReference>
<dbReference type="NCBIfam" id="TIGR01011">
    <property type="entry name" value="rpsB_bact"/>
    <property type="match status" value="1"/>
</dbReference>
<dbReference type="PANTHER" id="PTHR12534">
    <property type="entry name" value="30S RIBOSOMAL PROTEIN S2 PROKARYOTIC AND ORGANELLAR"/>
    <property type="match status" value="1"/>
</dbReference>
<dbReference type="PANTHER" id="PTHR12534:SF0">
    <property type="entry name" value="SMALL RIBOSOMAL SUBUNIT PROTEIN US2M"/>
    <property type="match status" value="1"/>
</dbReference>
<dbReference type="Pfam" id="PF00318">
    <property type="entry name" value="Ribosomal_S2"/>
    <property type="match status" value="1"/>
</dbReference>
<dbReference type="Pfam" id="PF01938">
    <property type="entry name" value="TRAM"/>
    <property type="match status" value="1"/>
</dbReference>
<dbReference type="SUPFAM" id="SSF52313">
    <property type="entry name" value="Ribosomal protein S2"/>
    <property type="match status" value="1"/>
</dbReference>
<dbReference type="PROSITE" id="PS50926">
    <property type="entry name" value="TRAM"/>
    <property type="match status" value="2"/>
</dbReference>
<organism>
    <name type="scientific">Chlamydomonas reinhardtii</name>
    <name type="common">Chlamydomonas smithii</name>
    <dbReference type="NCBI Taxonomy" id="3055"/>
    <lineage>
        <taxon>Eukaryota</taxon>
        <taxon>Viridiplantae</taxon>
        <taxon>Chlorophyta</taxon>
        <taxon>core chlorophytes</taxon>
        <taxon>Chlorophyceae</taxon>
        <taxon>CS clade</taxon>
        <taxon>Chlamydomonadales</taxon>
        <taxon>Chlamydomonadaceae</taxon>
        <taxon>Chlamydomonas</taxon>
    </lineage>
</organism>
<keyword id="KW-0150">Chloroplast</keyword>
<keyword id="KW-0903">Direct protein sequencing</keyword>
<keyword id="KW-0934">Plastid</keyword>
<keyword id="KW-1185">Reference proteome</keyword>
<keyword id="KW-0677">Repeat</keyword>
<keyword id="KW-0687">Ribonucleoprotein</keyword>
<keyword id="KW-0689">Ribosomal protein</keyword>